<name>DPO3A_STAAN</name>
<comment type="function">
    <text evidence="1">DNA polymerase III is a complex, multichain enzyme responsible for most of the replicative synthesis in bacteria. This DNA polymerase also exhibits 3' to 5' exonuclease activity. The alpha chain is the DNA polymerase (By similarity).</text>
</comment>
<comment type="catalytic activity">
    <reaction>
        <text>DNA(n) + a 2'-deoxyribonucleoside 5'-triphosphate = DNA(n+1) + diphosphate</text>
        <dbReference type="Rhea" id="RHEA:22508"/>
        <dbReference type="Rhea" id="RHEA-COMP:17339"/>
        <dbReference type="Rhea" id="RHEA-COMP:17340"/>
        <dbReference type="ChEBI" id="CHEBI:33019"/>
        <dbReference type="ChEBI" id="CHEBI:61560"/>
        <dbReference type="ChEBI" id="CHEBI:173112"/>
        <dbReference type="EC" id="2.7.7.7"/>
    </reaction>
</comment>
<comment type="subunit">
    <text evidence="1">DNA polymerase III contains a core (composed of alpha, epsilon and theta chains) that associates with a tau subunit. This core dimerizes to form the PolIII' complex. PolIII' associates with the gamma complex (composed of gamma, delta, delta', psi and chi chains) and with the beta chain to form the complete DNA polymerase III complex (By similarity).</text>
</comment>
<comment type="subcellular location">
    <subcellularLocation>
        <location evidence="1">Cytoplasm</location>
    </subcellularLocation>
</comment>
<comment type="similarity">
    <text evidence="2">Belongs to the DNA polymerase type-C family. DnaE subfamily.</text>
</comment>
<sequence>MVAYLNIHTAYDLLNSSLKIEDAVRLAVSENVDALAITDTNVLYGFPKFYDACIANNIKPIFGMTIYVTNGLNTVETVVLAKNNDGLKDLYQLSSEIKMNSMENVSFELLQQFSSNLIIIFKNVADEHRDIVQVFDSHEDTYLDHQSVLVQGIKHVWIQNVCYQTRQDADTISALAAIRDNAKLDLIHDQEDFGAHFLTEKEIKQLDINQEYLTQVDVIAQKCNAELKYHQSLLPQYQTPNDESAKKYLWRVLVTQLKKLELNYDVYLERLKYEYKVITNMGFEDYFLIVSDLIHYAKTNDVMVGPGRGSSAGSLVSYLLGITTIDPIKFNLLFERFLNPERVTMPDIDIDFEDTRRERVIQYVQEKYGELHVSGIVTFGHLLARAVARDVGRIMGFDEVTLNEISSLIPHKLGITLDEAYQIDDFKKFVHRNHRHERWFSICKKLEGLPRHTSTHAAGIIINDHPLYEYAPLTKGDTGLLTQWTMTEAERIGLLKIDFLGLRNLSIIHQILIQVKKDLGINIDIEKIPFDDQKVFELLSQGDTTGIFQLESDGVRSVLKKLKPEHFEDIVAVTSLYRPGPMEEIPTYITRRHDPSKVQYLHPHLEPILKNTYGVIIYQEQIMQIASTFANFSYGEADILRRAMSKKNRAVLESERQHFIEGAKQNGYHEDISKQIFDLILKFADYGFPRAHAVSYSKIAYIMSFLKVHYPNYFYANILSNVIGSEKKTAQMIEEAKKQGITILPPNINESHWFYKPSQEGIYLSIGTIKGVGYQSVKVIVDERYQNGKFKDFFDFARRIPKRVKTRKLLEALILVGAFDAFGKTRSTLLQAIDQVLDGDLNIEQDGFLFDILTPKQMYEDKEELPDALISQYEKEYLGFYVSQHPVDKKFVAKQYLTIFKLSNAQNYKPILVQFDKVKQIRTKNGQNMAFVTLNDGIETLDGVIFPNQFKKYEELLSHNDLFIVSGKFDHRKQQRQLIINEIQTLATFEEQKLAFAKQIIIRNKSQIDMFEEMIKATKENANDVVLSFYDETIKQMTTLGYINQKDSMFNNFIQSFNPSDIRLI</sequence>
<feature type="chain" id="PRO_0000103341" description="DNA polymerase III subunit alpha">
    <location>
        <begin position="1"/>
        <end position="1065"/>
    </location>
</feature>
<evidence type="ECO:0000250" key="1"/>
<evidence type="ECO:0000305" key="2"/>
<reference key="1">
    <citation type="journal article" date="2001" name="Lancet">
        <title>Whole genome sequencing of meticillin-resistant Staphylococcus aureus.</title>
        <authorList>
            <person name="Kuroda M."/>
            <person name="Ohta T."/>
            <person name="Uchiyama I."/>
            <person name="Baba T."/>
            <person name="Yuzawa H."/>
            <person name="Kobayashi I."/>
            <person name="Cui L."/>
            <person name="Oguchi A."/>
            <person name="Aoki K."/>
            <person name="Nagai Y."/>
            <person name="Lian J.-Q."/>
            <person name="Ito T."/>
            <person name="Kanamori M."/>
            <person name="Matsumaru H."/>
            <person name="Maruyama A."/>
            <person name="Murakami H."/>
            <person name="Hosoyama A."/>
            <person name="Mizutani-Ui Y."/>
            <person name="Takahashi N.K."/>
            <person name="Sawano T."/>
            <person name="Inoue R."/>
            <person name="Kaito C."/>
            <person name="Sekimizu K."/>
            <person name="Hirakawa H."/>
            <person name="Kuhara S."/>
            <person name="Goto S."/>
            <person name="Yabuzaki J."/>
            <person name="Kanehisa M."/>
            <person name="Yamashita A."/>
            <person name="Oshima K."/>
            <person name="Furuya K."/>
            <person name="Yoshino C."/>
            <person name="Shiba T."/>
            <person name="Hattori M."/>
            <person name="Ogasawara N."/>
            <person name="Hayashi H."/>
            <person name="Hiramatsu K."/>
        </authorList>
    </citation>
    <scope>NUCLEOTIDE SEQUENCE [LARGE SCALE GENOMIC DNA]</scope>
    <source>
        <strain>N315</strain>
    </source>
</reference>
<dbReference type="EC" id="2.7.7.7"/>
<dbReference type="EMBL" id="BA000018">
    <property type="protein sequence ID" value="BAB42792.1"/>
    <property type="molecule type" value="Genomic_DNA"/>
</dbReference>
<dbReference type="PIR" id="C89954">
    <property type="entry name" value="C89954"/>
</dbReference>
<dbReference type="RefSeq" id="WP_000226919.1">
    <property type="nucleotide sequence ID" value="NC_002745.2"/>
</dbReference>
<dbReference type="SMR" id="P63980"/>
<dbReference type="EnsemblBacteria" id="BAB42792">
    <property type="protein sequence ID" value="BAB42792"/>
    <property type="gene ID" value="BAB42792"/>
</dbReference>
<dbReference type="KEGG" id="sau:SA1525"/>
<dbReference type="HOGENOM" id="CLU_001600_0_0_9"/>
<dbReference type="GO" id="GO:0005737">
    <property type="term" value="C:cytoplasm"/>
    <property type="evidence" value="ECO:0007669"/>
    <property type="project" value="UniProtKB-SubCell"/>
</dbReference>
<dbReference type="GO" id="GO:0008408">
    <property type="term" value="F:3'-5' exonuclease activity"/>
    <property type="evidence" value="ECO:0007669"/>
    <property type="project" value="InterPro"/>
</dbReference>
<dbReference type="GO" id="GO:0003887">
    <property type="term" value="F:DNA-directed DNA polymerase activity"/>
    <property type="evidence" value="ECO:0007669"/>
    <property type="project" value="UniProtKB-KW"/>
</dbReference>
<dbReference type="GO" id="GO:0003676">
    <property type="term" value="F:nucleic acid binding"/>
    <property type="evidence" value="ECO:0007669"/>
    <property type="project" value="InterPro"/>
</dbReference>
<dbReference type="GO" id="GO:0006260">
    <property type="term" value="P:DNA replication"/>
    <property type="evidence" value="ECO:0007669"/>
    <property type="project" value="UniProtKB-KW"/>
</dbReference>
<dbReference type="CDD" id="cd04485">
    <property type="entry name" value="DnaE_OBF"/>
    <property type="match status" value="1"/>
</dbReference>
<dbReference type="CDD" id="cd07431">
    <property type="entry name" value="PHP_PolIIIA"/>
    <property type="match status" value="1"/>
</dbReference>
<dbReference type="Gene3D" id="1.10.150.870">
    <property type="match status" value="1"/>
</dbReference>
<dbReference type="Gene3D" id="1.10.10.1600">
    <property type="entry name" value="Bacterial DNA polymerase III alpha subunit, thumb domain"/>
    <property type="match status" value="1"/>
</dbReference>
<dbReference type="Gene3D" id="3.20.20.140">
    <property type="entry name" value="Metal-dependent hydrolases"/>
    <property type="match status" value="1"/>
</dbReference>
<dbReference type="InterPro" id="IPR011708">
    <property type="entry name" value="DNA_pol3_alpha_NTPase_dom"/>
</dbReference>
<dbReference type="InterPro" id="IPR041931">
    <property type="entry name" value="DNA_pol3_alpha_thumb_dom"/>
</dbReference>
<dbReference type="InterPro" id="IPR040982">
    <property type="entry name" value="DNA_pol3_finger"/>
</dbReference>
<dbReference type="InterPro" id="IPR004805">
    <property type="entry name" value="DnaE2/DnaE/PolC"/>
</dbReference>
<dbReference type="InterPro" id="IPR029460">
    <property type="entry name" value="DNAPol_HHH"/>
</dbReference>
<dbReference type="InterPro" id="IPR004365">
    <property type="entry name" value="NA-bd_OB_tRNA"/>
</dbReference>
<dbReference type="InterPro" id="IPR004013">
    <property type="entry name" value="PHP_dom"/>
</dbReference>
<dbReference type="InterPro" id="IPR003141">
    <property type="entry name" value="Pol/His_phosphatase_N"/>
</dbReference>
<dbReference type="InterPro" id="IPR016195">
    <property type="entry name" value="Pol/histidinol_Pase-like"/>
</dbReference>
<dbReference type="NCBIfam" id="TIGR00594">
    <property type="entry name" value="polc"/>
    <property type="match status" value="1"/>
</dbReference>
<dbReference type="PANTHER" id="PTHR32294">
    <property type="entry name" value="DNA POLYMERASE III SUBUNIT ALPHA"/>
    <property type="match status" value="1"/>
</dbReference>
<dbReference type="PANTHER" id="PTHR32294:SF0">
    <property type="entry name" value="DNA POLYMERASE III SUBUNIT ALPHA"/>
    <property type="match status" value="1"/>
</dbReference>
<dbReference type="Pfam" id="PF07733">
    <property type="entry name" value="DNA_pol3_alpha"/>
    <property type="match status" value="1"/>
</dbReference>
<dbReference type="Pfam" id="PF17657">
    <property type="entry name" value="DNA_pol3_finger"/>
    <property type="match status" value="1"/>
</dbReference>
<dbReference type="Pfam" id="PF14579">
    <property type="entry name" value="HHH_6"/>
    <property type="match status" value="1"/>
</dbReference>
<dbReference type="Pfam" id="PF02811">
    <property type="entry name" value="PHP"/>
    <property type="match status" value="1"/>
</dbReference>
<dbReference type="Pfam" id="PF01336">
    <property type="entry name" value="tRNA_anti-codon"/>
    <property type="match status" value="1"/>
</dbReference>
<dbReference type="SMART" id="SM00481">
    <property type="entry name" value="POLIIIAc"/>
    <property type="match status" value="1"/>
</dbReference>
<dbReference type="SUPFAM" id="SSF89550">
    <property type="entry name" value="PHP domain-like"/>
    <property type="match status" value="1"/>
</dbReference>
<gene>
    <name type="primary">dnaE</name>
    <name type="ordered locus">SA1525</name>
</gene>
<keyword id="KW-0963">Cytoplasm</keyword>
<keyword id="KW-0235">DNA replication</keyword>
<keyword id="KW-0239">DNA-directed DNA polymerase</keyword>
<keyword id="KW-0548">Nucleotidyltransferase</keyword>
<keyword id="KW-0808">Transferase</keyword>
<accession>P63980</accession>
<accession>Q99TG0</accession>
<protein>
    <recommendedName>
        <fullName>DNA polymerase III subunit alpha</fullName>
        <ecNumber>2.7.7.7</ecNumber>
    </recommendedName>
</protein>
<proteinExistence type="inferred from homology"/>
<organism>
    <name type="scientific">Staphylococcus aureus (strain N315)</name>
    <dbReference type="NCBI Taxonomy" id="158879"/>
    <lineage>
        <taxon>Bacteria</taxon>
        <taxon>Bacillati</taxon>
        <taxon>Bacillota</taxon>
        <taxon>Bacilli</taxon>
        <taxon>Bacillales</taxon>
        <taxon>Staphylococcaceae</taxon>
        <taxon>Staphylococcus</taxon>
    </lineage>
</organism>